<proteinExistence type="inferred from homology"/>
<dbReference type="EC" id="2.7.4.22" evidence="1"/>
<dbReference type="EMBL" id="AM774415">
    <property type="protein sequence ID" value="CAP14478.1"/>
    <property type="molecule type" value="Genomic_DNA"/>
</dbReference>
<dbReference type="RefSeq" id="WP_010903483.1">
    <property type="nucleotide sequence ID" value="NC_010364.1"/>
</dbReference>
<dbReference type="SMR" id="B0R6V9"/>
<dbReference type="EnsemblBacteria" id="CAP14478">
    <property type="protein sequence ID" value="CAP14478"/>
    <property type="gene ID" value="OE_3823F"/>
</dbReference>
<dbReference type="GeneID" id="89350199"/>
<dbReference type="KEGG" id="hsl:OE_3823F"/>
<dbReference type="HOGENOM" id="CLU_079546_0_0_2"/>
<dbReference type="PhylomeDB" id="B0R6V9"/>
<dbReference type="UniPathway" id="UPA00159">
    <property type="reaction ID" value="UER00275"/>
</dbReference>
<dbReference type="Proteomes" id="UP000001321">
    <property type="component" value="Chromosome"/>
</dbReference>
<dbReference type="GO" id="GO:0005737">
    <property type="term" value="C:cytoplasm"/>
    <property type="evidence" value="ECO:0007669"/>
    <property type="project" value="UniProtKB-SubCell"/>
</dbReference>
<dbReference type="GO" id="GO:0005524">
    <property type="term" value="F:ATP binding"/>
    <property type="evidence" value="ECO:0007669"/>
    <property type="project" value="UniProtKB-KW"/>
</dbReference>
<dbReference type="GO" id="GO:0033862">
    <property type="term" value="F:UMP kinase activity"/>
    <property type="evidence" value="ECO:0007669"/>
    <property type="project" value="UniProtKB-EC"/>
</dbReference>
<dbReference type="GO" id="GO:0044210">
    <property type="term" value="P:'de novo' CTP biosynthetic process"/>
    <property type="evidence" value="ECO:0007669"/>
    <property type="project" value="UniProtKB-UniRule"/>
</dbReference>
<dbReference type="GO" id="GO:0006225">
    <property type="term" value="P:UDP biosynthetic process"/>
    <property type="evidence" value="ECO:0007669"/>
    <property type="project" value="TreeGrafter"/>
</dbReference>
<dbReference type="CDD" id="cd04253">
    <property type="entry name" value="AAK_UMPK-PyrH-Pf"/>
    <property type="match status" value="1"/>
</dbReference>
<dbReference type="Gene3D" id="3.40.1160.10">
    <property type="entry name" value="Acetylglutamate kinase-like"/>
    <property type="match status" value="1"/>
</dbReference>
<dbReference type="HAMAP" id="MF_01220_A">
    <property type="entry name" value="PyrH_A"/>
    <property type="match status" value="1"/>
</dbReference>
<dbReference type="InterPro" id="IPR036393">
    <property type="entry name" value="AceGlu_kinase-like_sf"/>
</dbReference>
<dbReference type="InterPro" id="IPR001048">
    <property type="entry name" value="Asp/Glu/Uridylate_kinase"/>
</dbReference>
<dbReference type="InterPro" id="IPR011817">
    <property type="entry name" value="Uridylate_kinase"/>
</dbReference>
<dbReference type="InterPro" id="IPR011818">
    <property type="entry name" value="Uridylate_kinase_arch/spir"/>
</dbReference>
<dbReference type="NCBIfam" id="TIGR02076">
    <property type="entry name" value="pyrH_arch"/>
    <property type="match status" value="1"/>
</dbReference>
<dbReference type="PANTHER" id="PTHR42833">
    <property type="entry name" value="URIDYLATE KINASE"/>
    <property type="match status" value="1"/>
</dbReference>
<dbReference type="PANTHER" id="PTHR42833:SF4">
    <property type="entry name" value="URIDYLATE KINASE PUMPKIN, CHLOROPLASTIC"/>
    <property type="match status" value="1"/>
</dbReference>
<dbReference type="Pfam" id="PF00696">
    <property type="entry name" value="AA_kinase"/>
    <property type="match status" value="1"/>
</dbReference>
<dbReference type="PIRSF" id="PIRSF005650">
    <property type="entry name" value="Uridylate_kin"/>
    <property type="match status" value="1"/>
</dbReference>
<dbReference type="SUPFAM" id="SSF53633">
    <property type="entry name" value="Carbamate kinase-like"/>
    <property type="match status" value="1"/>
</dbReference>
<organism>
    <name type="scientific">Halobacterium salinarum (strain ATCC 29341 / DSM 671 / R1)</name>
    <dbReference type="NCBI Taxonomy" id="478009"/>
    <lineage>
        <taxon>Archaea</taxon>
        <taxon>Methanobacteriati</taxon>
        <taxon>Methanobacteriota</taxon>
        <taxon>Stenosarchaea group</taxon>
        <taxon>Halobacteria</taxon>
        <taxon>Halobacteriales</taxon>
        <taxon>Halobacteriaceae</taxon>
        <taxon>Halobacterium</taxon>
        <taxon>Halobacterium salinarum NRC-34001</taxon>
    </lineage>
</organism>
<keyword id="KW-0067">ATP-binding</keyword>
<keyword id="KW-0963">Cytoplasm</keyword>
<keyword id="KW-0418">Kinase</keyword>
<keyword id="KW-0547">Nucleotide-binding</keyword>
<keyword id="KW-0665">Pyrimidine biosynthesis</keyword>
<keyword id="KW-0808">Transferase</keyword>
<comment type="function">
    <text evidence="1">Catalyzes the reversible phosphorylation of UMP to UDP.</text>
</comment>
<comment type="catalytic activity">
    <reaction evidence="1">
        <text>UMP + ATP = UDP + ADP</text>
        <dbReference type="Rhea" id="RHEA:24400"/>
        <dbReference type="ChEBI" id="CHEBI:30616"/>
        <dbReference type="ChEBI" id="CHEBI:57865"/>
        <dbReference type="ChEBI" id="CHEBI:58223"/>
        <dbReference type="ChEBI" id="CHEBI:456216"/>
        <dbReference type="EC" id="2.7.4.22"/>
    </reaction>
</comment>
<comment type="activity regulation">
    <text evidence="1">Inhibited by UTP.</text>
</comment>
<comment type="pathway">
    <text evidence="1">Pyrimidine metabolism; CTP biosynthesis via de novo pathway; UDP from UMP (UMPK route): step 1/1.</text>
</comment>
<comment type="subunit">
    <text evidence="1">Homohexamer.</text>
</comment>
<comment type="subcellular location">
    <subcellularLocation>
        <location evidence="1">Cytoplasm</location>
    </subcellularLocation>
</comment>
<comment type="similarity">
    <text evidence="1">Belongs to the UMP kinase family.</text>
</comment>
<reference key="1">
    <citation type="journal article" date="2008" name="Genomics">
        <title>Evolution in the laboratory: the genome of Halobacterium salinarum strain R1 compared to that of strain NRC-1.</title>
        <authorList>
            <person name="Pfeiffer F."/>
            <person name="Schuster S.C."/>
            <person name="Broicher A."/>
            <person name="Falb M."/>
            <person name="Palm P."/>
            <person name="Rodewald K."/>
            <person name="Ruepp A."/>
            <person name="Soppa J."/>
            <person name="Tittor J."/>
            <person name="Oesterhelt D."/>
        </authorList>
    </citation>
    <scope>NUCLEOTIDE SEQUENCE [LARGE SCALE GENOMIC DNA]</scope>
    <source>
        <strain>ATCC 29341 / DSM 671 / R1</strain>
    </source>
</reference>
<name>PYRH_HALS3</name>
<accession>B0R6V9</accession>
<gene>
    <name evidence="1" type="primary">pyrH</name>
    <name type="ordered locus">OE_3823F</name>
</gene>
<protein>
    <recommendedName>
        <fullName evidence="1">Uridylate kinase</fullName>
        <shortName evidence="1">UK</shortName>
        <ecNumber evidence="1">2.7.4.22</ecNumber>
    </recommendedName>
    <alternativeName>
        <fullName evidence="1">Uridine monophosphate kinase</fullName>
        <shortName evidence="1">UMP kinase</shortName>
        <shortName evidence="1">UMPK</shortName>
    </alternativeName>
</protein>
<feature type="chain" id="PRO_1000139217" description="Uridylate kinase">
    <location>
        <begin position="1"/>
        <end position="241"/>
    </location>
</feature>
<feature type="binding site" evidence="1">
    <location>
        <begin position="9"/>
        <end position="10"/>
    </location>
    <ligand>
        <name>ATP</name>
        <dbReference type="ChEBI" id="CHEBI:30616"/>
    </ligand>
</feature>
<feature type="binding site" evidence="1">
    <location>
        <position position="44"/>
    </location>
    <ligand>
        <name>UMP</name>
        <dbReference type="ChEBI" id="CHEBI:57865"/>
    </ligand>
</feature>
<feature type="binding site" evidence="1">
    <location>
        <position position="45"/>
    </location>
    <ligand>
        <name>ATP</name>
        <dbReference type="ChEBI" id="CHEBI:30616"/>
    </ligand>
</feature>
<feature type="binding site" evidence="1">
    <location>
        <position position="49"/>
    </location>
    <ligand>
        <name>ATP</name>
        <dbReference type="ChEBI" id="CHEBI:30616"/>
    </ligand>
</feature>
<feature type="binding site" evidence="1">
    <location>
        <position position="66"/>
    </location>
    <ligand>
        <name>UMP</name>
        <dbReference type="ChEBI" id="CHEBI:57865"/>
    </ligand>
</feature>
<feature type="binding site" evidence="1">
    <location>
        <begin position="114"/>
        <end position="120"/>
    </location>
    <ligand>
        <name>UMP</name>
        <dbReference type="ChEBI" id="CHEBI:57865"/>
    </ligand>
</feature>
<feature type="binding site" evidence="1">
    <location>
        <position position="140"/>
    </location>
    <ligand>
        <name>ATP</name>
        <dbReference type="ChEBI" id="CHEBI:30616"/>
    </ligand>
</feature>
<feature type="binding site" evidence="1">
    <location>
        <position position="146"/>
    </location>
    <ligand>
        <name>ATP</name>
        <dbReference type="ChEBI" id="CHEBI:30616"/>
    </ligand>
</feature>
<feature type="binding site" evidence="1">
    <location>
        <position position="149"/>
    </location>
    <ligand>
        <name>ATP</name>
        <dbReference type="ChEBI" id="CHEBI:30616"/>
    </ligand>
</feature>
<evidence type="ECO:0000255" key="1">
    <source>
        <dbReference type="HAMAP-Rule" id="MF_01220"/>
    </source>
</evidence>
<sequence>MRVVVSIGGSVLAPGLDADQVDAHADAINELTDAGCEVGAVVGGGGVARDYIGTARELGANEIELDDIGVDVTRLNARLLIAALGGDAAPSPAEDYEDAGEAMRRGDIAVMGGVVAGQTTDAVSAALAEYTDADLLLYATSVPGVFSADPNEDADAEHFTRMTAGELVDIIADIEMNAGSSAPVDLLAAKLIERSGVRTIVLDGTDPRRIVDAVRFGEHDGTDVIPDGTDNQMTYWADNQE</sequence>